<sequence>MSKKLHIKTWGCQMNEYDSSKMADLLDEYQGYTLTEEAEEADVLLLNTCSIREKAQEKVFHQLGRWKTLKDKNPNLIIGVGGCVASQEGKAIKDRAQCVDLIFGPQTLHRLPEMIEQIQQGGKAVIDVSFPEIEKFDRLPEPRAEGPSAFVSIMEGCSKYCSFCVVPYTRGEEVSRPVDDVILEIAQLAEQGVREVNLLGQNVNAYRGATHDDDICTFAELLRYVAAIDGIDRIRFTTSHPIEFTQDIIDVYEDTPELVSFLHLPVQSGSDLILTQMKRGHMAIEYKSIIRRLRKARPDIQISSDFIVGFPGESKQDFADTMKLIEDVQFDHSFSFIYSARPGTPASDLPDDVSLDEKKERLAILQDRITQQAMRYSRQMLGTVQRILVEGPSVKNPMELRGRTENNRVVNFEADPKHIGSFVDVEIVDVFTNSLRGKFIRGEDEMDLRRDLRPSDILAKHKKDDDLGVTQFIP</sequence>
<comment type="function">
    <text evidence="1">Catalyzes the methylthiolation of N6-(dimethylallyl)adenosine (i(6)A), leading to the formation of 2-methylthio-N6-(dimethylallyl)adenosine (ms(2)i(6)A) at position 37 in tRNAs that read codons beginning with uridine.</text>
</comment>
<comment type="catalytic activity">
    <reaction evidence="1">
        <text>N(6)-dimethylallyladenosine(37) in tRNA + (sulfur carrier)-SH + AH2 + 2 S-adenosyl-L-methionine = 2-methylsulfanyl-N(6)-dimethylallyladenosine(37) in tRNA + (sulfur carrier)-H + 5'-deoxyadenosine + L-methionine + A + S-adenosyl-L-homocysteine + 2 H(+)</text>
        <dbReference type="Rhea" id="RHEA:37067"/>
        <dbReference type="Rhea" id="RHEA-COMP:10375"/>
        <dbReference type="Rhea" id="RHEA-COMP:10376"/>
        <dbReference type="Rhea" id="RHEA-COMP:14737"/>
        <dbReference type="Rhea" id="RHEA-COMP:14739"/>
        <dbReference type="ChEBI" id="CHEBI:13193"/>
        <dbReference type="ChEBI" id="CHEBI:15378"/>
        <dbReference type="ChEBI" id="CHEBI:17319"/>
        <dbReference type="ChEBI" id="CHEBI:17499"/>
        <dbReference type="ChEBI" id="CHEBI:29917"/>
        <dbReference type="ChEBI" id="CHEBI:57844"/>
        <dbReference type="ChEBI" id="CHEBI:57856"/>
        <dbReference type="ChEBI" id="CHEBI:59789"/>
        <dbReference type="ChEBI" id="CHEBI:64428"/>
        <dbReference type="ChEBI" id="CHEBI:74415"/>
        <dbReference type="ChEBI" id="CHEBI:74417"/>
        <dbReference type="EC" id="2.8.4.3"/>
    </reaction>
</comment>
<comment type="cofactor">
    <cofactor evidence="1">
        <name>[4Fe-4S] cluster</name>
        <dbReference type="ChEBI" id="CHEBI:49883"/>
    </cofactor>
    <text evidence="1">Binds 2 [4Fe-4S] clusters. One cluster is coordinated with 3 cysteines and an exchangeable S-adenosyl-L-methionine.</text>
</comment>
<comment type="subunit">
    <text evidence="1">Monomer.</text>
</comment>
<comment type="subcellular location">
    <subcellularLocation>
        <location evidence="1">Cytoplasm</location>
    </subcellularLocation>
</comment>
<comment type="similarity">
    <text evidence="1">Belongs to the methylthiotransferase family. MiaB subfamily.</text>
</comment>
<organism>
    <name type="scientific">Shewanella loihica (strain ATCC BAA-1088 / PV-4)</name>
    <dbReference type="NCBI Taxonomy" id="323850"/>
    <lineage>
        <taxon>Bacteria</taxon>
        <taxon>Pseudomonadati</taxon>
        <taxon>Pseudomonadota</taxon>
        <taxon>Gammaproteobacteria</taxon>
        <taxon>Alteromonadales</taxon>
        <taxon>Shewanellaceae</taxon>
        <taxon>Shewanella</taxon>
    </lineage>
</organism>
<keyword id="KW-0004">4Fe-4S</keyword>
<keyword id="KW-0963">Cytoplasm</keyword>
<keyword id="KW-0408">Iron</keyword>
<keyword id="KW-0411">Iron-sulfur</keyword>
<keyword id="KW-0479">Metal-binding</keyword>
<keyword id="KW-1185">Reference proteome</keyword>
<keyword id="KW-0949">S-adenosyl-L-methionine</keyword>
<keyword id="KW-0808">Transferase</keyword>
<keyword id="KW-0819">tRNA processing</keyword>
<name>MIAB_SHELP</name>
<protein>
    <recommendedName>
        <fullName evidence="1">tRNA-2-methylthio-N(6)-dimethylallyladenosine synthase</fullName>
        <ecNumber evidence="1">2.8.4.3</ecNumber>
    </recommendedName>
    <alternativeName>
        <fullName evidence="1">(Dimethylallyl)adenosine tRNA methylthiotransferase MiaB</fullName>
    </alternativeName>
    <alternativeName>
        <fullName evidence="1">tRNA-i(6)A37 methylthiotransferase</fullName>
    </alternativeName>
</protein>
<evidence type="ECO:0000255" key="1">
    <source>
        <dbReference type="HAMAP-Rule" id="MF_01864"/>
    </source>
</evidence>
<evidence type="ECO:0000255" key="2">
    <source>
        <dbReference type="PROSITE-ProRule" id="PRU01266"/>
    </source>
</evidence>
<proteinExistence type="inferred from homology"/>
<accession>A3QH41</accession>
<gene>
    <name evidence="1" type="primary">miaB</name>
    <name type="ordered locus">Shew_2923</name>
</gene>
<dbReference type="EC" id="2.8.4.3" evidence="1"/>
<dbReference type="EMBL" id="CP000606">
    <property type="protein sequence ID" value="ABO24789.1"/>
    <property type="molecule type" value="Genomic_DNA"/>
</dbReference>
<dbReference type="RefSeq" id="WP_011866720.1">
    <property type="nucleotide sequence ID" value="NC_009092.1"/>
</dbReference>
<dbReference type="SMR" id="A3QH41"/>
<dbReference type="STRING" id="323850.Shew_2923"/>
<dbReference type="KEGG" id="slo:Shew_2923"/>
<dbReference type="eggNOG" id="COG0621">
    <property type="taxonomic scope" value="Bacteria"/>
</dbReference>
<dbReference type="HOGENOM" id="CLU_018697_2_0_6"/>
<dbReference type="OrthoDB" id="9805215at2"/>
<dbReference type="Proteomes" id="UP000001558">
    <property type="component" value="Chromosome"/>
</dbReference>
<dbReference type="GO" id="GO:0005829">
    <property type="term" value="C:cytosol"/>
    <property type="evidence" value="ECO:0007669"/>
    <property type="project" value="TreeGrafter"/>
</dbReference>
<dbReference type="GO" id="GO:0051539">
    <property type="term" value="F:4 iron, 4 sulfur cluster binding"/>
    <property type="evidence" value="ECO:0007669"/>
    <property type="project" value="UniProtKB-UniRule"/>
</dbReference>
<dbReference type="GO" id="GO:0046872">
    <property type="term" value="F:metal ion binding"/>
    <property type="evidence" value="ECO:0007669"/>
    <property type="project" value="UniProtKB-KW"/>
</dbReference>
<dbReference type="GO" id="GO:0035597">
    <property type="term" value="F:N6-isopentenyladenosine methylthiotransferase activity"/>
    <property type="evidence" value="ECO:0007669"/>
    <property type="project" value="TreeGrafter"/>
</dbReference>
<dbReference type="CDD" id="cd01335">
    <property type="entry name" value="Radical_SAM"/>
    <property type="match status" value="1"/>
</dbReference>
<dbReference type="FunFam" id="3.40.50.12160:FF:000001">
    <property type="entry name" value="tRNA-2-methylthio-N(6)-dimethylallyladenosine synthase"/>
    <property type="match status" value="1"/>
</dbReference>
<dbReference type="FunFam" id="3.80.30.20:FF:000001">
    <property type="entry name" value="tRNA-2-methylthio-N(6)-dimethylallyladenosine synthase 2"/>
    <property type="match status" value="1"/>
</dbReference>
<dbReference type="Gene3D" id="3.40.50.12160">
    <property type="entry name" value="Methylthiotransferase, N-terminal domain"/>
    <property type="match status" value="1"/>
</dbReference>
<dbReference type="Gene3D" id="3.80.30.20">
    <property type="entry name" value="tm_1862 like domain"/>
    <property type="match status" value="1"/>
</dbReference>
<dbReference type="HAMAP" id="MF_01864">
    <property type="entry name" value="tRNA_metthiotr_MiaB"/>
    <property type="match status" value="1"/>
</dbReference>
<dbReference type="InterPro" id="IPR006638">
    <property type="entry name" value="Elp3/MiaA/NifB-like_rSAM"/>
</dbReference>
<dbReference type="InterPro" id="IPR005839">
    <property type="entry name" value="Methylthiotransferase"/>
</dbReference>
<dbReference type="InterPro" id="IPR020612">
    <property type="entry name" value="Methylthiotransferase_CS"/>
</dbReference>
<dbReference type="InterPro" id="IPR013848">
    <property type="entry name" value="Methylthiotransferase_N"/>
</dbReference>
<dbReference type="InterPro" id="IPR038135">
    <property type="entry name" value="Methylthiotransferase_N_sf"/>
</dbReference>
<dbReference type="InterPro" id="IPR006463">
    <property type="entry name" value="MiaB_methiolase"/>
</dbReference>
<dbReference type="InterPro" id="IPR007197">
    <property type="entry name" value="rSAM"/>
</dbReference>
<dbReference type="InterPro" id="IPR023404">
    <property type="entry name" value="rSAM_horseshoe"/>
</dbReference>
<dbReference type="InterPro" id="IPR002792">
    <property type="entry name" value="TRAM_dom"/>
</dbReference>
<dbReference type="NCBIfam" id="TIGR01574">
    <property type="entry name" value="miaB-methiolase"/>
    <property type="match status" value="1"/>
</dbReference>
<dbReference type="NCBIfam" id="TIGR00089">
    <property type="entry name" value="MiaB/RimO family radical SAM methylthiotransferase"/>
    <property type="match status" value="1"/>
</dbReference>
<dbReference type="PANTHER" id="PTHR43020">
    <property type="entry name" value="CDK5 REGULATORY SUBUNIT-ASSOCIATED PROTEIN 1"/>
    <property type="match status" value="1"/>
</dbReference>
<dbReference type="PANTHER" id="PTHR43020:SF2">
    <property type="entry name" value="MITOCHONDRIAL TRNA METHYLTHIOTRANSFERASE CDK5RAP1"/>
    <property type="match status" value="1"/>
</dbReference>
<dbReference type="Pfam" id="PF04055">
    <property type="entry name" value="Radical_SAM"/>
    <property type="match status" value="1"/>
</dbReference>
<dbReference type="Pfam" id="PF01938">
    <property type="entry name" value="TRAM"/>
    <property type="match status" value="1"/>
</dbReference>
<dbReference type="Pfam" id="PF00919">
    <property type="entry name" value="UPF0004"/>
    <property type="match status" value="1"/>
</dbReference>
<dbReference type="SFLD" id="SFLDF00273">
    <property type="entry name" value="(dimethylallyl)adenosine_tRNA"/>
    <property type="match status" value="1"/>
</dbReference>
<dbReference type="SFLD" id="SFLDG01082">
    <property type="entry name" value="B12-binding_domain_containing"/>
    <property type="match status" value="1"/>
</dbReference>
<dbReference type="SFLD" id="SFLDS00029">
    <property type="entry name" value="Radical_SAM"/>
    <property type="match status" value="1"/>
</dbReference>
<dbReference type="SMART" id="SM00729">
    <property type="entry name" value="Elp3"/>
    <property type="match status" value="1"/>
</dbReference>
<dbReference type="SUPFAM" id="SSF102114">
    <property type="entry name" value="Radical SAM enzymes"/>
    <property type="match status" value="1"/>
</dbReference>
<dbReference type="PROSITE" id="PS51449">
    <property type="entry name" value="MTTASE_N"/>
    <property type="match status" value="1"/>
</dbReference>
<dbReference type="PROSITE" id="PS01278">
    <property type="entry name" value="MTTASE_RADICAL"/>
    <property type="match status" value="1"/>
</dbReference>
<dbReference type="PROSITE" id="PS51918">
    <property type="entry name" value="RADICAL_SAM"/>
    <property type="match status" value="1"/>
</dbReference>
<dbReference type="PROSITE" id="PS50926">
    <property type="entry name" value="TRAM"/>
    <property type="match status" value="1"/>
</dbReference>
<feature type="chain" id="PRO_0000374540" description="tRNA-2-methylthio-N(6)-dimethylallyladenosine synthase">
    <location>
        <begin position="1"/>
        <end position="474"/>
    </location>
</feature>
<feature type="domain" description="MTTase N-terminal" evidence="1">
    <location>
        <begin position="3"/>
        <end position="120"/>
    </location>
</feature>
<feature type="domain" description="Radical SAM core" evidence="2">
    <location>
        <begin position="143"/>
        <end position="375"/>
    </location>
</feature>
<feature type="domain" description="TRAM" evidence="1">
    <location>
        <begin position="378"/>
        <end position="441"/>
    </location>
</feature>
<feature type="binding site" evidence="1">
    <location>
        <position position="12"/>
    </location>
    <ligand>
        <name>[4Fe-4S] cluster</name>
        <dbReference type="ChEBI" id="CHEBI:49883"/>
        <label>1</label>
    </ligand>
</feature>
<feature type="binding site" evidence="1">
    <location>
        <position position="49"/>
    </location>
    <ligand>
        <name>[4Fe-4S] cluster</name>
        <dbReference type="ChEBI" id="CHEBI:49883"/>
        <label>1</label>
    </ligand>
</feature>
<feature type="binding site" evidence="1">
    <location>
        <position position="83"/>
    </location>
    <ligand>
        <name>[4Fe-4S] cluster</name>
        <dbReference type="ChEBI" id="CHEBI:49883"/>
        <label>1</label>
    </ligand>
</feature>
<feature type="binding site" evidence="1">
    <location>
        <position position="157"/>
    </location>
    <ligand>
        <name>[4Fe-4S] cluster</name>
        <dbReference type="ChEBI" id="CHEBI:49883"/>
        <label>2</label>
        <note>4Fe-4S-S-AdoMet</note>
    </ligand>
</feature>
<feature type="binding site" evidence="1">
    <location>
        <position position="161"/>
    </location>
    <ligand>
        <name>[4Fe-4S] cluster</name>
        <dbReference type="ChEBI" id="CHEBI:49883"/>
        <label>2</label>
        <note>4Fe-4S-S-AdoMet</note>
    </ligand>
</feature>
<feature type="binding site" evidence="1">
    <location>
        <position position="164"/>
    </location>
    <ligand>
        <name>[4Fe-4S] cluster</name>
        <dbReference type="ChEBI" id="CHEBI:49883"/>
        <label>2</label>
        <note>4Fe-4S-S-AdoMet</note>
    </ligand>
</feature>
<reference key="1">
    <citation type="submission" date="2007-03" db="EMBL/GenBank/DDBJ databases">
        <title>Complete sequence of Shewanella loihica PV-4.</title>
        <authorList>
            <consortium name="US DOE Joint Genome Institute"/>
            <person name="Copeland A."/>
            <person name="Lucas S."/>
            <person name="Lapidus A."/>
            <person name="Barry K."/>
            <person name="Detter J.C."/>
            <person name="Glavina del Rio T."/>
            <person name="Hammon N."/>
            <person name="Israni S."/>
            <person name="Dalin E."/>
            <person name="Tice H."/>
            <person name="Pitluck S."/>
            <person name="Chain P."/>
            <person name="Malfatti S."/>
            <person name="Shin M."/>
            <person name="Vergez L."/>
            <person name="Schmutz J."/>
            <person name="Larimer F."/>
            <person name="Land M."/>
            <person name="Hauser L."/>
            <person name="Kyrpides N."/>
            <person name="Mikhailova N."/>
            <person name="Romine M.F."/>
            <person name="Serres G."/>
            <person name="Fredrickson J."/>
            <person name="Tiedje J."/>
            <person name="Richardson P."/>
        </authorList>
    </citation>
    <scope>NUCLEOTIDE SEQUENCE [LARGE SCALE GENOMIC DNA]</scope>
    <source>
        <strain>ATCC BAA-1088 / PV-4</strain>
    </source>
</reference>